<sequence length="201" mass="22605">MNYLKNIFYWSKLNYDEQQKILSRPILNRNHTVKDTVKKVIENVKNFGDNALRKYSILFDKFNVNEFRIPEEKIISSFLNINENLKSSILIAKKNITSFHEAQILSTIDIETQIGVRCQQVYLPLNSVGIYIPNGTTSLFSSVLMLAIPAKIAGCKEIILCSPPPINNNILYASYVCGIKKIFQVGGAQAIAALAFGTETI</sequence>
<dbReference type="EC" id="1.1.1.23"/>
<dbReference type="EMBL" id="AF129281">
    <property type="protein sequence ID" value="AAF13770.1"/>
    <property type="molecule type" value="Genomic_DNA"/>
</dbReference>
<dbReference type="SMR" id="Q9RQ88"/>
<dbReference type="STRING" id="118101.ATN01_00490"/>
<dbReference type="UniPathway" id="UPA00031">
    <property type="reaction ID" value="UER00014"/>
</dbReference>
<dbReference type="GO" id="GO:0005829">
    <property type="term" value="C:cytosol"/>
    <property type="evidence" value="ECO:0007669"/>
    <property type="project" value="TreeGrafter"/>
</dbReference>
<dbReference type="GO" id="GO:0004399">
    <property type="term" value="F:histidinol dehydrogenase activity"/>
    <property type="evidence" value="ECO:0007669"/>
    <property type="project" value="UniProtKB-EC"/>
</dbReference>
<dbReference type="GO" id="GO:0046872">
    <property type="term" value="F:metal ion binding"/>
    <property type="evidence" value="ECO:0007669"/>
    <property type="project" value="UniProtKB-KW"/>
</dbReference>
<dbReference type="GO" id="GO:0051287">
    <property type="term" value="F:NAD binding"/>
    <property type="evidence" value="ECO:0007669"/>
    <property type="project" value="InterPro"/>
</dbReference>
<dbReference type="GO" id="GO:0000105">
    <property type="term" value="P:L-histidine biosynthetic process"/>
    <property type="evidence" value="ECO:0007669"/>
    <property type="project" value="UniProtKB-UniPathway"/>
</dbReference>
<dbReference type="Gene3D" id="1.20.5.1300">
    <property type="match status" value="1"/>
</dbReference>
<dbReference type="Gene3D" id="3.40.50.1980">
    <property type="entry name" value="Nitrogenase molybdenum iron protein domain"/>
    <property type="match status" value="1"/>
</dbReference>
<dbReference type="InterPro" id="IPR016161">
    <property type="entry name" value="Ald_DH/histidinol_DH"/>
</dbReference>
<dbReference type="InterPro" id="IPR012131">
    <property type="entry name" value="Hstdl_DH"/>
</dbReference>
<dbReference type="PANTHER" id="PTHR21256:SF2">
    <property type="entry name" value="HISTIDINE BIOSYNTHESIS TRIFUNCTIONAL PROTEIN"/>
    <property type="match status" value="1"/>
</dbReference>
<dbReference type="PANTHER" id="PTHR21256">
    <property type="entry name" value="HISTIDINOL DEHYDROGENASE HDH"/>
    <property type="match status" value="1"/>
</dbReference>
<dbReference type="Pfam" id="PF00815">
    <property type="entry name" value="Histidinol_dh"/>
    <property type="match status" value="1"/>
</dbReference>
<dbReference type="PRINTS" id="PR00083">
    <property type="entry name" value="HOLDHDRGNASE"/>
</dbReference>
<dbReference type="SUPFAM" id="SSF53720">
    <property type="entry name" value="ALDH-like"/>
    <property type="match status" value="1"/>
</dbReference>
<name>HISX_BUCDN</name>
<organism>
    <name type="scientific">Buchnera aphidicola subsp. Diuraphis noxia</name>
    <dbReference type="NCBI Taxonomy" id="118101"/>
    <lineage>
        <taxon>Bacteria</taxon>
        <taxon>Pseudomonadati</taxon>
        <taxon>Pseudomonadota</taxon>
        <taxon>Gammaproteobacteria</taxon>
        <taxon>Enterobacterales</taxon>
        <taxon>Erwiniaceae</taxon>
        <taxon>Buchnera</taxon>
    </lineage>
</organism>
<comment type="function">
    <text evidence="1">Catalyzes the sequential NAD-dependent oxidations of L-histidinol to L-histidinaldehyde and then to L-histidine.</text>
</comment>
<comment type="catalytic activity">
    <reaction>
        <text>L-histidinol + 2 NAD(+) + H2O = L-histidine + 2 NADH + 3 H(+)</text>
        <dbReference type="Rhea" id="RHEA:20641"/>
        <dbReference type="ChEBI" id="CHEBI:15377"/>
        <dbReference type="ChEBI" id="CHEBI:15378"/>
        <dbReference type="ChEBI" id="CHEBI:57540"/>
        <dbReference type="ChEBI" id="CHEBI:57595"/>
        <dbReference type="ChEBI" id="CHEBI:57699"/>
        <dbReference type="ChEBI" id="CHEBI:57945"/>
        <dbReference type="EC" id="1.1.1.23"/>
    </reaction>
</comment>
<comment type="cofactor">
    <cofactor evidence="1">
        <name>Zn(2+)</name>
        <dbReference type="ChEBI" id="CHEBI:29105"/>
    </cofactor>
    <text evidence="1">Binds 1 zinc ion per subunit.</text>
</comment>
<comment type="pathway">
    <text>Amino-acid biosynthesis; L-histidine biosynthesis; L-histidine from 5-phospho-alpha-D-ribose 1-diphosphate: step 9/9.</text>
</comment>
<comment type="subunit">
    <text evidence="1">Homodimer.</text>
</comment>
<comment type="similarity">
    <text evidence="2">Belongs to the histidinol dehydrogenase family.</text>
</comment>
<proteinExistence type="inferred from homology"/>
<gene>
    <name type="primary">hisD</name>
</gene>
<evidence type="ECO:0000250" key="1"/>
<evidence type="ECO:0000305" key="2"/>
<accession>Q9RQ88</accession>
<keyword id="KW-0028">Amino-acid biosynthesis</keyword>
<keyword id="KW-0368">Histidine biosynthesis</keyword>
<keyword id="KW-0479">Metal-binding</keyword>
<keyword id="KW-0520">NAD</keyword>
<keyword id="KW-0560">Oxidoreductase</keyword>
<keyword id="KW-0862">Zinc</keyword>
<protein>
    <recommendedName>
        <fullName>Histidinol dehydrogenase</fullName>
        <shortName>HDH</shortName>
        <ecNumber>1.1.1.23</ecNumber>
    </recommendedName>
</protein>
<feature type="chain" id="PRO_0000135744" description="Histidinol dehydrogenase">
    <location>
        <begin position="1"/>
        <end position="201" status="greater than"/>
    </location>
</feature>
<feature type="non-terminal residue">
    <location>
        <position position="201"/>
    </location>
</feature>
<reference key="1">
    <citation type="journal article" date="1999" name="Mol. Biol. Evol.">
        <title>Sequence evolution in bacterial endosymbionts having extreme base compositions.</title>
        <authorList>
            <person name="Clark M.A."/>
            <person name="Moran N.A."/>
            <person name="Baumann P."/>
        </authorList>
    </citation>
    <scope>NUCLEOTIDE SEQUENCE [GENOMIC DNA]</scope>
</reference>